<keyword id="KW-0150">Chloroplast</keyword>
<keyword id="KW-0934">Plastid</keyword>
<keyword id="KW-0687">Ribonucleoprotein</keyword>
<keyword id="KW-0689">Ribosomal protein</keyword>
<geneLocation type="chloroplast"/>
<comment type="subcellular location">
    <subcellularLocation>
        <location>Plastid</location>
        <location>Chloroplast</location>
    </subcellularLocation>
</comment>
<comment type="similarity">
    <text evidence="1">Belongs to the bacterial ribosomal protein bL32 family.</text>
</comment>
<sequence length="59" mass="6790">MAVPKKRTSMSKKRIRKNLWKKKTYFSIVQSYSLAKSRSFSSGNEHPKPKGFSGQQANK</sequence>
<gene>
    <name evidence="1" type="primary">rpl32</name>
    <name type="ordered locus">PS039</name>
</gene>
<feature type="chain" id="PRO_0000172478" description="Large ribosomal subunit protein bL32c">
    <location>
        <begin position="1"/>
        <end position="59"/>
    </location>
</feature>
<feature type="region of interest" description="Disordered" evidence="2">
    <location>
        <begin position="37"/>
        <end position="59"/>
    </location>
</feature>
<proteinExistence type="inferred from homology"/>
<protein>
    <recommendedName>
        <fullName evidence="1">Large ribosomal subunit protein bL32c</fullName>
    </recommendedName>
    <alternativeName>
        <fullName evidence="3">50S ribosomal protein L32, chloroplastic</fullName>
    </alternativeName>
</protein>
<evidence type="ECO:0000255" key="1">
    <source>
        <dbReference type="HAMAP-Rule" id="MF_00340"/>
    </source>
</evidence>
<evidence type="ECO:0000256" key="2">
    <source>
        <dbReference type="SAM" id="MobiDB-lite"/>
    </source>
</evidence>
<evidence type="ECO:0000305" key="3"/>
<organism>
    <name type="scientific">Saccharum hybrid</name>
    <name type="common">Sugarcane</name>
    <dbReference type="NCBI Taxonomy" id="15819"/>
    <lineage>
        <taxon>Eukaryota</taxon>
        <taxon>Viridiplantae</taxon>
        <taxon>Streptophyta</taxon>
        <taxon>Embryophyta</taxon>
        <taxon>Tracheophyta</taxon>
        <taxon>Spermatophyta</taxon>
        <taxon>Magnoliopsida</taxon>
        <taxon>Liliopsida</taxon>
        <taxon>Poales</taxon>
        <taxon>Poaceae</taxon>
        <taxon>PACMAD clade</taxon>
        <taxon>Panicoideae</taxon>
        <taxon>Andropogonodae</taxon>
        <taxon>Andropogoneae</taxon>
        <taxon>Saccharinae</taxon>
        <taxon>Saccharum</taxon>
    </lineage>
</organism>
<dbReference type="EMBL" id="AE009947">
    <property type="protein sequence ID" value="AAT44651.1"/>
    <property type="molecule type" value="Genomic_DNA"/>
</dbReference>
<dbReference type="SMR" id="Q6L3E2"/>
<dbReference type="GO" id="GO:0009507">
    <property type="term" value="C:chloroplast"/>
    <property type="evidence" value="ECO:0007669"/>
    <property type="project" value="UniProtKB-SubCell"/>
</dbReference>
<dbReference type="GO" id="GO:0015934">
    <property type="term" value="C:large ribosomal subunit"/>
    <property type="evidence" value="ECO:0007669"/>
    <property type="project" value="InterPro"/>
</dbReference>
<dbReference type="GO" id="GO:0003735">
    <property type="term" value="F:structural constituent of ribosome"/>
    <property type="evidence" value="ECO:0007669"/>
    <property type="project" value="InterPro"/>
</dbReference>
<dbReference type="GO" id="GO:0006412">
    <property type="term" value="P:translation"/>
    <property type="evidence" value="ECO:0007669"/>
    <property type="project" value="UniProtKB-UniRule"/>
</dbReference>
<dbReference type="HAMAP" id="MF_00340">
    <property type="entry name" value="Ribosomal_bL32"/>
    <property type="match status" value="1"/>
</dbReference>
<dbReference type="InterPro" id="IPR002677">
    <property type="entry name" value="Ribosomal_bL32"/>
</dbReference>
<dbReference type="InterPro" id="IPR044958">
    <property type="entry name" value="Ribosomal_bL32_plant/cyanobact"/>
</dbReference>
<dbReference type="InterPro" id="IPR011332">
    <property type="entry name" value="Ribosomal_zn-bd"/>
</dbReference>
<dbReference type="PANTHER" id="PTHR36083">
    <property type="entry name" value="50S RIBOSOMAL PROTEIN L32, CHLOROPLASTIC"/>
    <property type="match status" value="1"/>
</dbReference>
<dbReference type="PANTHER" id="PTHR36083:SF1">
    <property type="entry name" value="LARGE RIBOSOMAL SUBUNIT PROTEIN BL32C"/>
    <property type="match status" value="1"/>
</dbReference>
<dbReference type="Pfam" id="PF01783">
    <property type="entry name" value="Ribosomal_L32p"/>
    <property type="match status" value="1"/>
</dbReference>
<dbReference type="SUPFAM" id="SSF57829">
    <property type="entry name" value="Zn-binding ribosomal proteins"/>
    <property type="match status" value="1"/>
</dbReference>
<accession>Q6L3E2</accession>
<name>RK32_SACHY</name>
<reference key="1">
    <citation type="journal article" date="2004" name="Curr. Genet.">
        <title>Structural features and transcript-editing analysis of sugarcane (Saccharum officinarum L.) chloroplast genome.</title>
        <authorList>
            <person name="Calsa T. Jr."/>
            <person name="Carraro D.M."/>
            <person name="Benatti M.R."/>
            <person name="Barbosa A.C."/>
            <person name="Kitajima J.P."/>
            <person name="Carrer H."/>
        </authorList>
    </citation>
    <scope>NUCLEOTIDE SEQUENCE [LARGE SCALE GENOMIC DNA]</scope>
    <source>
        <strain>cv. SP-80-3280</strain>
    </source>
</reference>